<gene>
    <name type="primary">dusp29</name>
    <name type="synonym">dupd1</name>
</gene>
<organism>
    <name type="scientific">Gasterosteus aculeatus</name>
    <name type="common">Three-spined stickleback</name>
    <dbReference type="NCBI Taxonomy" id="69293"/>
    <lineage>
        <taxon>Eukaryota</taxon>
        <taxon>Metazoa</taxon>
        <taxon>Chordata</taxon>
        <taxon>Craniata</taxon>
        <taxon>Vertebrata</taxon>
        <taxon>Euteleostomi</taxon>
        <taxon>Actinopterygii</taxon>
        <taxon>Neopterygii</taxon>
        <taxon>Teleostei</taxon>
        <taxon>Neoteleostei</taxon>
        <taxon>Acanthomorphata</taxon>
        <taxon>Eupercaria</taxon>
        <taxon>Perciformes</taxon>
        <taxon>Cottioidei</taxon>
        <taxon>Gasterosteales</taxon>
        <taxon>Gasterosteidae</taxon>
        <taxon>Gasterosteus</taxon>
    </lineage>
</organism>
<comment type="function">
    <text evidence="1 2">Dual specificity phosphatase able to dephosphorylate phosphotyrosine, phosphoserine and phosphothreonine residues within the same substrate, with a preference for phosphotyrosine as a substrate (By similarity). Involved in the modulation of AMPK and MAPK1/2 signaling pathways (By similarity).</text>
</comment>
<comment type="catalytic activity">
    <reaction evidence="1">
        <text>O-phospho-L-tyrosyl-[protein] + H2O = L-tyrosyl-[protein] + phosphate</text>
        <dbReference type="Rhea" id="RHEA:10684"/>
        <dbReference type="Rhea" id="RHEA-COMP:10136"/>
        <dbReference type="Rhea" id="RHEA-COMP:20101"/>
        <dbReference type="ChEBI" id="CHEBI:15377"/>
        <dbReference type="ChEBI" id="CHEBI:43474"/>
        <dbReference type="ChEBI" id="CHEBI:46858"/>
        <dbReference type="ChEBI" id="CHEBI:61978"/>
        <dbReference type="EC" id="3.1.3.48"/>
    </reaction>
</comment>
<comment type="catalytic activity">
    <reaction evidence="1">
        <text>O-phospho-L-seryl-[protein] + H2O = L-seryl-[protein] + phosphate</text>
        <dbReference type="Rhea" id="RHEA:20629"/>
        <dbReference type="Rhea" id="RHEA-COMP:9863"/>
        <dbReference type="Rhea" id="RHEA-COMP:11604"/>
        <dbReference type="ChEBI" id="CHEBI:15377"/>
        <dbReference type="ChEBI" id="CHEBI:29999"/>
        <dbReference type="ChEBI" id="CHEBI:43474"/>
        <dbReference type="ChEBI" id="CHEBI:83421"/>
        <dbReference type="EC" id="3.1.3.16"/>
    </reaction>
</comment>
<comment type="catalytic activity">
    <reaction evidence="1">
        <text>O-phospho-L-threonyl-[protein] + H2O = L-threonyl-[protein] + phosphate</text>
        <dbReference type="Rhea" id="RHEA:47004"/>
        <dbReference type="Rhea" id="RHEA-COMP:11060"/>
        <dbReference type="Rhea" id="RHEA-COMP:11605"/>
        <dbReference type="ChEBI" id="CHEBI:15377"/>
        <dbReference type="ChEBI" id="CHEBI:30013"/>
        <dbReference type="ChEBI" id="CHEBI:43474"/>
        <dbReference type="ChEBI" id="CHEBI:61977"/>
        <dbReference type="EC" id="3.1.3.16"/>
    </reaction>
</comment>
<comment type="subcellular location">
    <subcellularLocation>
        <location evidence="1">Cytoplasm</location>
    </subcellularLocation>
    <subcellularLocation>
        <location evidence="2">Nucleus</location>
    </subcellularLocation>
</comment>
<comment type="similarity">
    <text evidence="4">Belongs to the protein-tyrosine phosphatase family. Non-receptor class dual specificity subfamily.</text>
</comment>
<name>DUS29_GASAC</name>
<keyword id="KW-0963">Cytoplasm</keyword>
<keyword id="KW-0378">Hydrolase</keyword>
<keyword id="KW-0539">Nucleus</keyword>
<keyword id="KW-0904">Protein phosphatase</keyword>
<reference key="1">
    <citation type="submission" date="2006-01" db="EMBL/GenBank/DDBJ databases">
        <authorList>
            <person name="Lindblad-Toh K."/>
            <person name="Mauceli E."/>
            <person name="Grabherr M."/>
            <person name="Chang J.L."/>
            <person name="Lander E.S."/>
        </authorList>
    </citation>
    <scope>NUCLEOTIDE SEQUENCE [LARGE SCALE GENOMIC DNA]</scope>
</reference>
<feature type="chain" id="PRO_0000295887" description="Dual specificity phosphatase 29">
    <location>
        <begin position="1"/>
        <end position="206"/>
    </location>
</feature>
<feature type="domain" description="Tyrosine-protein phosphatase" evidence="3">
    <location>
        <begin position="47"/>
        <end position="194"/>
    </location>
</feature>
<feature type="active site" description="Phosphocysteine intermediate" evidence="3">
    <location>
        <position position="139"/>
    </location>
</feature>
<feature type="binding site" evidence="1">
    <location>
        <begin position="138"/>
        <end position="145"/>
    </location>
    <ligand>
        <name>substrate</name>
    </ligand>
</feature>
<evidence type="ECO:0000250" key="1">
    <source>
        <dbReference type="UniProtKB" id="Q68J44"/>
    </source>
</evidence>
<evidence type="ECO:0000250" key="2">
    <source>
        <dbReference type="UniProtKB" id="Q8BK84"/>
    </source>
</evidence>
<evidence type="ECO:0000255" key="3">
    <source>
        <dbReference type="PROSITE-ProRule" id="PRU00160"/>
    </source>
</evidence>
<evidence type="ECO:0000305" key="4"/>
<dbReference type="EC" id="3.1.3.16" evidence="1"/>
<dbReference type="EC" id="3.1.3.48" evidence="1"/>
<dbReference type="EMBL" id="AANH01005129">
    <property type="status" value="NOT_ANNOTATED_CDS"/>
    <property type="molecule type" value="Genomic_DNA"/>
</dbReference>
<dbReference type="SMR" id="P0C5A0"/>
<dbReference type="STRING" id="69293.ENSGACP00000008697"/>
<dbReference type="eggNOG" id="KOG1716">
    <property type="taxonomic scope" value="Eukaryota"/>
</dbReference>
<dbReference type="InParanoid" id="P0C5A0"/>
<dbReference type="GO" id="GO:0005737">
    <property type="term" value="C:cytoplasm"/>
    <property type="evidence" value="ECO:0000250"/>
    <property type="project" value="UniProtKB"/>
</dbReference>
<dbReference type="GO" id="GO:0005634">
    <property type="term" value="C:nucleus"/>
    <property type="evidence" value="ECO:0000250"/>
    <property type="project" value="UniProtKB"/>
</dbReference>
<dbReference type="GO" id="GO:0033549">
    <property type="term" value="F:MAP kinase phosphatase activity"/>
    <property type="evidence" value="ECO:0007669"/>
    <property type="project" value="TreeGrafter"/>
</dbReference>
<dbReference type="GO" id="GO:0004722">
    <property type="term" value="F:protein serine/threonine phosphatase activity"/>
    <property type="evidence" value="ECO:0007669"/>
    <property type="project" value="UniProtKB-EC"/>
</dbReference>
<dbReference type="GO" id="GO:0004725">
    <property type="term" value="F:protein tyrosine phosphatase activity"/>
    <property type="evidence" value="ECO:0007669"/>
    <property type="project" value="UniProtKB-EC"/>
</dbReference>
<dbReference type="GO" id="GO:0008138">
    <property type="term" value="F:protein tyrosine/serine/threonine phosphatase activity"/>
    <property type="evidence" value="ECO:0000250"/>
    <property type="project" value="UniProtKB"/>
</dbReference>
<dbReference type="GO" id="GO:0043409">
    <property type="term" value="P:negative regulation of MAPK cascade"/>
    <property type="evidence" value="ECO:0007669"/>
    <property type="project" value="TreeGrafter"/>
</dbReference>
<dbReference type="GO" id="GO:0006470">
    <property type="term" value="P:protein dephosphorylation"/>
    <property type="evidence" value="ECO:0000250"/>
    <property type="project" value="UniProtKB"/>
</dbReference>
<dbReference type="FunFam" id="3.90.190.10:FF:000037">
    <property type="entry name" value="dual specificity protein phosphatase 26"/>
    <property type="match status" value="1"/>
</dbReference>
<dbReference type="Gene3D" id="3.90.190.10">
    <property type="entry name" value="Protein tyrosine phosphatase superfamily"/>
    <property type="match status" value="1"/>
</dbReference>
<dbReference type="InterPro" id="IPR020405">
    <property type="entry name" value="Atypical_DUSP_subfamA"/>
</dbReference>
<dbReference type="InterPro" id="IPR000340">
    <property type="entry name" value="Dual-sp_phosphatase_cat-dom"/>
</dbReference>
<dbReference type="InterPro" id="IPR029021">
    <property type="entry name" value="Prot-tyrosine_phosphatase-like"/>
</dbReference>
<dbReference type="InterPro" id="IPR016130">
    <property type="entry name" value="Tyr_Pase_AS"/>
</dbReference>
<dbReference type="InterPro" id="IPR000387">
    <property type="entry name" value="Tyr_Pase_dom"/>
</dbReference>
<dbReference type="InterPro" id="IPR020422">
    <property type="entry name" value="TYR_PHOSPHATASE_DUAL_dom"/>
</dbReference>
<dbReference type="PANTHER" id="PTHR45682">
    <property type="entry name" value="AGAP008228-PA"/>
    <property type="match status" value="1"/>
</dbReference>
<dbReference type="PANTHER" id="PTHR45682:SF6">
    <property type="entry name" value="DUAL SPECIFICITY PHOSPHATASE 29"/>
    <property type="match status" value="1"/>
</dbReference>
<dbReference type="Pfam" id="PF00782">
    <property type="entry name" value="DSPc"/>
    <property type="match status" value="1"/>
</dbReference>
<dbReference type="PRINTS" id="PR01908">
    <property type="entry name" value="ADSPHPHTASE"/>
</dbReference>
<dbReference type="PRINTS" id="PR01909">
    <property type="entry name" value="ADSPHPHTASEA"/>
</dbReference>
<dbReference type="SMART" id="SM00195">
    <property type="entry name" value="DSPc"/>
    <property type="match status" value="1"/>
</dbReference>
<dbReference type="SUPFAM" id="SSF52799">
    <property type="entry name" value="(Phosphotyrosine protein) phosphatases II"/>
    <property type="match status" value="1"/>
</dbReference>
<dbReference type="PROSITE" id="PS00383">
    <property type="entry name" value="TYR_PHOSPHATASE_1"/>
    <property type="match status" value="1"/>
</dbReference>
<dbReference type="PROSITE" id="PS50056">
    <property type="entry name" value="TYR_PHOSPHATASE_2"/>
    <property type="match status" value="1"/>
</dbReference>
<dbReference type="PROSITE" id="PS50054">
    <property type="entry name" value="TYR_PHOSPHATASE_DUAL"/>
    <property type="match status" value="1"/>
</dbReference>
<protein>
    <recommendedName>
        <fullName>Dual specificity phosphatase 29</fullName>
    </recommendedName>
    <alternativeName>
        <fullName>Dual specificity phosphatase DUPD1</fullName>
        <ecNumber evidence="1">3.1.3.16</ecNumber>
        <ecNumber evidence="1">3.1.3.48</ecNumber>
    </alternativeName>
</protein>
<accession>P0C5A0</accession>
<proteinExistence type="inferred from homology"/>
<sequence length="206" mass="23359">MSSRVVKSRSKNPYAAVQVDPDSDYITPGTLDLEQLFWTSTGAQYAHVNQVWPSVYVGDEKTALERPGLRVLGITHVLNAAEGKWNNVLTGAHYYTDMDIQYFGVEADDKPTFNISQFFCSATQFIHEALSHPKVLVHCVMGRSRSAALVLAYLMMEHGLTVVDAIEHVRQRRCVLPNHGFLRQLRALDITLQEDRLRQKRGMQEQ</sequence>